<sequence length="247" mass="27579">MIFDPPLQSGQLVSRYKRFLTDVQLDNGEVITIHCANTGAMTGCAEPGTRVWYSTSSNPKRKLPHSWEIAESPAGHFICVNTARANQLARELIEQDALAPLRGYARLRTEVKYGEENSRIDLLLEDDHRPACYIEVKSVTLLDEREQAGMGYFPDAVTTRGAKHLRELMAMKAAGHRAVLLFMVLHSGIVRMRPAAHIDPHYSLLIEQAITAGVEILCYRPHVGVQSMVAQDFIPFESCHLLPEGSE</sequence>
<organism>
    <name type="scientific">Aeromonas hydrophila subsp. hydrophila (strain ATCC 7966 / DSM 30187 / BCRC 13018 / CCUG 14551 / JCM 1027 / KCTC 2358 / NCIMB 9240 / NCTC 8049)</name>
    <dbReference type="NCBI Taxonomy" id="380703"/>
    <lineage>
        <taxon>Bacteria</taxon>
        <taxon>Pseudomonadati</taxon>
        <taxon>Pseudomonadota</taxon>
        <taxon>Gammaproteobacteria</taxon>
        <taxon>Aeromonadales</taxon>
        <taxon>Aeromonadaceae</taxon>
        <taxon>Aeromonas</taxon>
    </lineage>
</organism>
<name>SFSA_AERHH</name>
<gene>
    <name evidence="1" type="primary">sfsA</name>
    <name type="ordered locus">AHA_3533</name>
</gene>
<proteinExistence type="inferred from homology"/>
<keyword id="KW-1185">Reference proteome</keyword>
<reference key="1">
    <citation type="journal article" date="2006" name="J. Bacteriol.">
        <title>Genome sequence of Aeromonas hydrophila ATCC 7966T: jack of all trades.</title>
        <authorList>
            <person name="Seshadri R."/>
            <person name="Joseph S.W."/>
            <person name="Chopra A.K."/>
            <person name="Sha J."/>
            <person name="Shaw J."/>
            <person name="Graf J."/>
            <person name="Haft D.H."/>
            <person name="Wu M."/>
            <person name="Ren Q."/>
            <person name="Rosovitz M.J."/>
            <person name="Madupu R."/>
            <person name="Tallon L."/>
            <person name="Kim M."/>
            <person name="Jin S."/>
            <person name="Vuong H."/>
            <person name="Stine O.C."/>
            <person name="Ali A."/>
            <person name="Horneman A.J."/>
            <person name="Heidelberg J.F."/>
        </authorList>
    </citation>
    <scope>NUCLEOTIDE SEQUENCE [LARGE SCALE GENOMIC DNA]</scope>
    <source>
        <strain>ATCC 7966 / DSM 30187 / BCRC 13018 / CCUG 14551 / JCM 1027 / KCTC 2358 / NCIMB 9240 / NCTC 8049</strain>
    </source>
</reference>
<dbReference type="EMBL" id="CP000462">
    <property type="protein sequence ID" value="ABK35947.1"/>
    <property type="molecule type" value="Genomic_DNA"/>
</dbReference>
<dbReference type="RefSeq" id="WP_011707277.1">
    <property type="nucleotide sequence ID" value="NC_008570.1"/>
</dbReference>
<dbReference type="RefSeq" id="YP_858003.1">
    <property type="nucleotide sequence ID" value="NC_008570.1"/>
</dbReference>
<dbReference type="SMR" id="A0KP02"/>
<dbReference type="STRING" id="380703.AHA_3533"/>
<dbReference type="EnsemblBacteria" id="ABK35947">
    <property type="protein sequence ID" value="ABK35947"/>
    <property type="gene ID" value="AHA_3533"/>
</dbReference>
<dbReference type="GeneID" id="4488705"/>
<dbReference type="KEGG" id="aha:AHA_3533"/>
<dbReference type="PATRIC" id="fig|380703.7.peg.3518"/>
<dbReference type="eggNOG" id="COG1489">
    <property type="taxonomic scope" value="Bacteria"/>
</dbReference>
<dbReference type="HOGENOM" id="CLU_052299_2_0_6"/>
<dbReference type="OrthoDB" id="9802365at2"/>
<dbReference type="Proteomes" id="UP000000756">
    <property type="component" value="Chromosome"/>
</dbReference>
<dbReference type="GO" id="GO:0003677">
    <property type="term" value="F:DNA binding"/>
    <property type="evidence" value="ECO:0007669"/>
    <property type="project" value="InterPro"/>
</dbReference>
<dbReference type="CDD" id="cd22359">
    <property type="entry name" value="SfsA-like_bacterial"/>
    <property type="match status" value="1"/>
</dbReference>
<dbReference type="FunFam" id="2.40.50.580:FF:000001">
    <property type="entry name" value="Sugar fermentation stimulation protein A"/>
    <property type="match status" value="1"/>
</dbReference>
<dbReference type="FunFam" id="3.40.1350.60:FF:000001">
    <property type="entry name" value="Sugar fermentation stimulation protein A"/>
    <property type="match status" value="1"/>
</dbReference>
<dbReference type="Gene3D" id="2.40.50.580">
    <property type="match status" value="1"/>
</dbReference>
<dbReference type="Gene3D" id="3.40.1350.60">
    <property type="match status" value="1"/>
</dbReference>
<dbReference type="HAMAP" id="MF_00095">
    <property type="entry name" value="SfsA"/>
    <property type="match status" value="1"/>
</dbReference>
<dbReference type="InterPro" id="IPR005224">
    <property type="entry name" value="SfsA"/>
</dbReference>
<dbReference type="InterPro" id="IPR040452">
    <property type="entry name" value="SfsA_C"/>
</dbReference>
<dbReference type="InterPro" id="IPR041465">
    <property type="entry name" value="SfsA_N"/>
</dbReference>
<dbReference type="NCBIfam" id="TIGR00230">
    <property type="entry name" value="sfsA"/>
    <property type="match status" value="1"/>
</dbReference>
<dbReference type="PANTHER" id="PTHR30545">
    <property type="entry name" value="SUGAR FERMENTATION STIMULATION PROTEIN A"/>
    <property type="match status" value="1"/>
</dbReference>
<dbReference type="PANTHER" id="PTHR30545:SF2">
    <property type="entry name" value="SUGAR FERMENTATION STIMULATION PROTEIN A"/>
    <property type="match status" value="1"/>
</dbReference>
<dbReference type="Pfam" id="PF03749">
    <property type="entry name" value="SfsA"/>
    <property type="match status" value="1"/>
</dbReference>
<dbReference type="Pfam" id="PF17746">
    <property type="entry name" value="SfsA_N"/>
    <property type="match status" value="1"/>
</dbReference>
<accession>A0KP02</accession>
<protein>
    <recommendedName>
        <fullName evidence="1">Sugar fermentation stimulation protein homolog</fullName>
    </recommendedName>
</protein>
<comment type="similarity">
    <text evidence="1">Belongs to the SfsA family.</text>
</comment>
<evidence type="ECO:0000255" key="1">
    <source>
        <dbReference type="HAMAP-Rule" id="MF_00095"/>
    </source>
</evidence>
<feature type="chain" id="PRO_1000007964" description="Sugar fermentation stimulation protein homolog">
    <location>
        <begin position="1"/>
        <end position="247"/>
    </location>
</feature>